<proteinExistence type="inferred from homology"/>
<feature type="chain" id="PRO_1000199335" description="Phenylalanine--tRNA ligase beta subunit">
    <location>
        <begin position="1"/>
        <end position="564"/>
    </location>
</feature>
<feature type="domain" description="B5" evidence="1">
    <location>
        <begin position="286"/>
        <end position="362"/>
    </location>
</feature>
<feature type="binding site" evidence="1">
    <location>
        <position position="340"/>
    </location>
    <ligand>
        <name>Mg(2+)</name>
        <dbReference type="ChEBI" id="CHEBI:18420"/>
        <note>shared with alpha subunit</note>
    </ligand>
</feature>
<feature type="binding site" evidence="1">
    <location>
        <position position="346"/>
    </location>
    <ligand>
        <name>Mg(2+)</name>
        <dbReference type="ChEBI" id="CHEBI:18420"/>
        <note>shared with alpha subunit</note>
    </ligand>
</feature>
<feature type="binding site" evidence="1">
    <location>
        <position position="349"/>
    </location>
    <ligand>
        <name>Mg(2+)</name>
        <dbReference type="ChEBI" id="CHEBI:18420"/>
        <note>shared with alpha subunit</note>
    </ligand>
</feature>
<feature type="binding site" evidence="1">
    <location>
        <position position="350"/>
    </location>
    <ligand>
        <name>Mg(2+)</name>
        <dbReference type="ChEBI" id="CHEBI:18420"/>
        <note>shared with alpha subunit</note>
    </ligand>
</feature>
<reference key="1">
    <citation type="submission" date="2004-12" db="EMBL/GenBank/DDBJ databases">
        <title>The genome sequence of Borrelia hermsii and Borrelia turicatae: comparative analysis of two agents of endemic N. America relapsing fever.</title>
        <authorList>
            <person name="Porcella S.F."/>
            <person name="Raffel S.J."/>
            <person name="Schrumpf M.E."/>
            <person name="Montgomery B."/>
            <person name="Smith T."/>
            <person name="Schwan T.G."/>
        </authorList>
    </citation>
    <scope>NUCLEOTIDE SEQUENCE [LARGE SCALE GENOMIC DNA]</scope>
    <source>
        <strain>91E135</strain>
    </source>
</reference>
<accession>A1QZU9</accession>
<sequence length="564" mass="64351">MPKVEIYKSILLEKIGKILTKSELVSVLEMAKAEICEFDTVNDKIKIEFNDTNRPDLWSCAGLARQIKTYLFGHLPLFKFFSMADNLQEFYGEILVSPEVFSIRPFIFGFLAKGVICNERMLETLIQLQEKLCHNYGQKRKRVAMGMYSSDLIEFPLSYTACNSDYRFIPLGMDREMSIEEINRVHSKGIEYSTILASFNKYPLLLDDKDKVLSYPPVINSHDIGALKVGDTDLFIEVTGTNLEATLLSLSVTACDLHDMGFEILPVKTIFPNETLFGKEIICPYYFQNMLEVNVDNVNKMLGSNFTANNMCLDLKKLGISAYFKELDKFYVIPPVYRNDFLHEVDVIEEIMIGMGLDSFKPELPKDFTLGRLSQIEEFSRKIKNLMIGMGFQEMIYNYLGSRTDFIEKMNIEGDDFLSVANPMTEGYEYIRGSIVSDLLKSESISSNFPYPHKIFEIGKVALKDLNSVDGTITYDNLAFLMADKEFSFNEINSLVSSLFYYLNIEFKLRESSKSLYIDGRGVDILINDTVLGGFGEVSPYILRNFGIMVPCCVLEINLNKLLN</sequence>
<name>SYFB_BORT9</name>
<gene>
    <name evidence="1" type="primary">pheT</name>
    <name type="ordered locus">BT0514</name>
</gene>
<comment type="catalytic activity">
    <reaction evidence="1">
        <text>tRNA(Phe) + L-phenylalanine + ATP = L-phenylalanyl-tRNA(Phe) + AMP + diphosphate + H(+)</text>
        <dbReference type="Rhea" id="RHEA:19413"/>
        <dbReference type="Rhea" id="RHEA-COMP:9668"/>
        <dbReference type="Rhea" id="RHEA-COMP:9699"/>
        <dbReference type="ChEBI" id="CHEBI:15378"/>
        <dbReference type="ChEBI" id="CHEBI:30616"/>
        <dbReference type="ChEBI" id="CHEBI:33019"/>
        <dbReference type="ChEBI" id="CHEBI:58095"/>
        <dbReference type="ChEBI" id="CHEBI:78442"/>
        <dbReference type="ChEBI" id="CHEBI:78531"/>
        <dbReference type="ChEBI" id="CHEBI:456215"/>
        <dbReference type="EC" id="6.1.1.20"/>
    </reaction>
</comment>
<comment type="cofactor">
    <cofactor evidence="1">
        <name>Mg(2+)</name>
        <dbReference type="ChEBI" id="CHEBI:18420"/>
    </cofactor>
</comment>
<comment type="subunit">
    <text evidence="1">Tetramer of two alpha and two beta subunits.</text>
</comment>
<comment type="subcellular location">
    <subcellularLocation>
        <location evidence="1">Cytoplasm</location>
    </subcellularLocation>
</comment>
<comment type="similarity">
    <text evidence="1">Belongs to the phenylalanyl-tRNA synthetase beta subunit family. Type 2 subfamily.</text>
</comment>
<organism>
    <name type="scientific">Borrelia turicatae (strain 91E135)</name>
    <dbReference type="NCBI Taxonomy" id="314724"/>
    <lineage>
        <taxon>Bacteria</taxon>
        <taxon>Pseudomonadati</taxon>
        <taxon>Spirochaetota</taxon>
        <taxon>Spirochaetia</taxon>
        <taxon>Spirochaetales</taxon>
        <taxon>Borreliaceae</taxon>
        <taxon>Borrelia</taxon>
    </lineage>
</organism>
<evidence type="ECO:0000255" key="1">
    <source>
        <dbReference type="HAMAP-Rule" id="MF_00284"/>
    </source>
</evidence>
<protein>
    <recommendedName>
        <fullName evidence="1">Phenylalanine--tRNA ligase beta subunit</fullName>
        <ecNumber evidence="1">6.1.1.20</ecNumber>
    </recommendedName>
    <alternativeName>
        <fullName evidence="1">Phenylalanyl-tRNA synthetase beta subunit</fullName>
        <shortName evidence="1">PheRS</shortName>
    </alternativeName>
</protein>
<dbReference type="EC" id="6.1.1.20" evidence="1"/>
<dbReference type="EMBL" id="CP000049">
    <property type="protein sequence ID" value="AAX17841.1"/>
    <property type="molecule type" value="Genomic_DNA"/>
</dbReference>
<dbReference type="RefSeq" id="WP_011772459.1">
    <property type="nucleotide sequence ID" value="NC_008710.1"/>
</dbReference>
<dbReference type="SMR" id="A1QZU9"/>
<dbReference type="KEGG" id="btu:BT0514"/>
<dbReference type="eggNOG" id="COG0072">
    <property type="taxonomic scope" value="Bacteria"/>
</dbReference>
<dbReference type="HOGENOM" id="CLU_020279_3_0_12"/>
<dbReference type="Proteomes" id="UP000001205">
    <property type="component" value="Chromosome"/>
</dbReference>
<dbReference type="GO" id="GO:0009328">
    <property type="term" value="C:phenylalanine-tRNA ligase complex"/>
    <property type="evidence" value="ECO:0007669"/>
    <property type="project" value="TreeGrafter"/>
</dbReference>
<dbReference type="GO" id="GO:0005524">
    <property type="term" value="F:ATP binding"/>
    <property type="evidence" value="ECO:0007669"/>
    <property type="project" value="UniProtKB-UniRule"/>
</dbReference>
<dbReference type="GO" id="GO:0000287">
    <property type="term" value="F:magnesium ion binding"/>
    <property type="evidence" value="ECO:0007669"/>
    <property type="project" value="InterPro"/>
</dbReference>
<dbReference type="GO" id="GO:0004826">
    <property type="term" value="F:phenylalanine-tRNA ligase activity"/>
    <property type="evidence" value="ECO:0007669"/>
    <property type="project" value="UniProtKB-UniRule"/>
</dbReference>
<dbReference type="GO" id="GO:0003723">
    <property type="term" value="F:RNA binding"/>
    <property type="evidence" value="ECO:0007669"/>
    <property type="project" value="InterPro"/>
</dbReference>
<dbReference type="GO" id="GO:0006432">
    <property type="term" value="P:phenylalanyl-tRNA aminoacylation"/>
    <property type="evidence" value="ECO:0007669"/>
    <property type="project" value="UniProtKB-UniRule"/>
</dbReference>
<dbReference type="Gene3D" id="3.30.56.10">
    <property type="match status" value="2"/>
</dbReference>
<dbReference type="Gene3D" id="3.30.930.10">
    <property type="entry name" value="Bira Bifunctional Protein, Domain 2"/>
    <property type="match status" value="1"/>
</dbReference>
<dbReference type="Gene3D" id="3.50.40.10">
    <property type="entry name" value="Phenylalanyl-trna Synthetase, Chain B, domain 3"/>
    <property type="match status" value="1"/>
</dbReference>
<dbReference type="HAMAP" id="MF_00284">
    <property type="entry name" value="Phe_tRNA_synth_beta2"/>
    <property type="match status" value="1"/>
</dbReference>
<dbReference type="InterPro" id="IPR045864">
    <property type="entry name" value="aa-tRNA-synth_II/BPL/LPL"/>
</dbReference>
<dbReference type="InterPro" id="IPR005146">
    <property type="entry name" value="B3/B4_tRNA-bd"/>
</dbReference>
<dbReference type="InterPro" id="IPR009061">
    <property type="entry name" value="DNA-bd_dom_put_sf"/>
</dbReference>
<dbReference type="InterPro" id="IPR045060">
    <property type="entry name" value="Phe-tRNA-ligase_IIc_bsu"/>
</dbReference>
<dbReference type="InterPro" id="IPR004531">
    <property type="entry name" value="Phe-tRNA-synth_IIc_bsu_arc_euk"/>
</dbReference>
<dbReference type="InterPro" id="IPR020825">
    <property type="entry name" value="Phe-tRNA_synthase-like_B3/B4"/>
</dbReference>
<dbReference type="InterPro" id="IPR022918">
    <property type="entry name" value="Phe_tRNA_ligase_beta2_arc"/>
</dbReference>
<dbReference type="InterPro" id="IPR041616">
    <property type="entry name" value="PheRS_beta_core"/>
</dbReference>
<dbReference type="InterPro" id="IPR005147">
    <property type="entry name" value="tRNA_synthase_B5-dom"/>
</dbReference>
<dbReference type="NCBIfam" id="TIGR00471">
    <property type="entry name" value="pheT_arch"/>
    <property type="match status" value="1"/>
</dbReference>
<dbReference type="PANTHER" id="PTHR10947:SF0">
    <property type="entry name" value="PHENYLALANINE--TRNA LIGASE BETA SUBUNIT"/>
    <property type="match status" value="1"/>
</dbReference>
<dbReference type="PANTHER" id="PTHR10947">
    <property type="entry name" value="PHENYLALANYL-TRNA SYNTHETASE BETA CHAIN AND LEUCINE-RICH REPEAT-CONTAINING PROTEIN 47"/>
    <property type="match status" value="1"/>
</dbReference>
<dbReference type="Pfam" id="PF03484">
    <property type="entry name" value="B5"/>
    <property type="match status" value="1"/>
</dbReference>
<dbReference type="Pfam" id="PF17759">
    <property type="entry name" value="tRNA_synthFbeta"/>
    <property type="match status" value="1"/>
</dbReference>
<dbReference type="SMART" id="SM00873">
    <property type="entry name" value="B3_4"/>
    <property type="match status" value="1"/>
</dbReference>
<dbReference type="SMART" id="SM00874">
    <property type="entry name" value="B5"/>
    <property type="match status" value="1"/>
</dbReference>
<dbReference type="SUPFAM" id="SSF55681">
    <property type="entry name" value="Class II aaRS and biotin synthetases"/>
    <property type="match status" value="1"/>
</dbReference>
<dbReference type="SUPFAM" id="SSF46955">
    <property type="entry name" value="Putative DNA-binding domain"/>
    <property type="match status" value="1"/>
</dbReference>
<dbReference type="PROSITE" id="PS51483">
    <property type="entry name" value="B5"/>
    <property type="match status" value="1"/>
</dbReference>
<keyword id="KW-0030">Aminoacyl-tRNA synthetase</keyword>
<keyword id="KW-0067">ATP-binding</keyword>
<keyword id="KW-0963">Cytoplasm</keyword>
<keyword id="KW-0436">Ligase</keyword>
<keyword id="KW-0460">Magnesium</keyword>
<keyword id="KW-0479">Metal-binding</keyword>
<keyword id="KW-0547">Nucleotide-binding</keyword>
<keyword id="KW-0648">Protein biosynthesis</keyword>
<keyword id="KW-1185">Reference proteome</keyword>